<name>B9D1_XENLA</name>
<sequence length="198" mass="22001">MASGPSVFLLNVSGQIESAEFPEFDDLYCKYSFVYGHDWAPTSGIEEGISQITSKSQGGKQTLVWNFPVEITFKSTNPYGWPQIVISVYGPDVFGNDVVRGYGAVHLPFTPGRHTRTIPMFVPESSSRLQRFTSWFMGRRPEFTDPKVVAQGEGREVTRVRSQGCVTVSFNVVTKDLKKLGYNTGSSDFPSAQLMPQP</sequence>
<feature type="chain" id="PRO_0000307671" description="B9 domain-containing protein 1">
    <location>
        <begin position="1"/>
        <end position="198"/>
    </location>
</feature>
<feature type="domain" description="C2 B9-type" evidence="2">
    <location>
        <begin position="8"/>
        <end position="126"/>
    </location>
</feature>
<protein>
    <recommendedName>
        <fullName>B9 domain-containing protein 1</fullName>
    </recommendedName>
</protein>
<accession>Q6DFD7</accession>
<gene>
    <name type="primary">b9d1</name>
</gene>
<keyword id="KW-0966">Cell projection</keyword>
<keyword id="KW-0970">Cilium biogenesis/degradation</keyword>
<keyword id="KW-0963">Cytoplasm</keyword>
<keyword id="KW-0206">Cytoskeleton</keyword>
<keyword id="KW-1185">Reference proteome</keyword>
<reference key="1">
    <citation type="submission" date="2004-07" db="EMBL/GenBank/DDBJ databases">
        <authorList>
            <consortium name="NIH - Xenopus Gene Collection (XGC) project"/>
        </authorList>
    </citation>
    <scope>NUCLEOTIDE SEQUENCE [LARGE SCALE MRNA]</scope>
    <source>
        <tissue>Oocyte</tissue>
    </source>
</reference>
<proteinExistence type="evidence at transcript level"/>
<comment type="function">
    <text evidence="1">Component of the tectonic-like complex, a complex localized at the transition zone of primary cilia and acting as a barrier that prevents diffusion of transmembrane proteins between the cilia and plasma membranes. Required for ciliogenesis and sonic hedgehog/SHH signaling (By similarity).</text>
</comment>
<comment type="subunit">
    <text evidence="1">Part of the tectonic-like complex (also named B9 complex).</text>
</comment>
<comment type="subcellular location">
    <subcellularLocation>
        <location evidence="1">Cytoplasm</location>
        <location evidence="1">Cytoskeleton</location>
        <location evidence="1">Cilium basal body</location>
    </subcellularLocation>
    <text evidence="1">Localizes at the transition zone, a region between the basal body and the ciliary axoneme.</text>
</comment>
<comment type="similarity">
    <text evidence="3">Belongs to the B9D family.</text>
</comment>
<organism>
    <name type="scientific">Xenopus laevis</name>
    <name type="common">African clawed frog</name>
    <dbReference type="NCBI Taxonomy" id="8355"/>
    <lineage>
        <taxon>Eukaryota</taxon>
        <taxon>Metazoa</taxon>
        <taxon>Chordata</taxon>
        <taxon>Craniata</taxon>
        <taxon>Vertebrata</taxon>
        <taxon>Euteleostomi</taxon>
        <taxon>Amphibia</taxon>
        <taxon>Batrachia</taxon>
        <taxon>Anura</taxon>
        <taxon>Pipoidea</taxon>
        <taxon>Pipidae</taxon>
        <taxon>Xenopodinae</taxon>
        <taxon>Xenopus</taxon>
        <taxon>Xenopus</taxon>
    </lineage>
</organism>
<dbReference type="EMBL" id="BC076802">
    <property type="protein sequence ID" value="AAH76802.1"/>
    <property type="molecule type" value="mRNA"/>
</dbReference>
<dbReference type="RefSeq" id="NP_001086557.1">
    <property type="nucleotide sequence ID" value="NM_001093088.1"/>
</dbReference>
<dbReference type="DNASU" id="446392"/>
<dbReference type="GeneID" id="446392"/>
<dbReference type="KEGG" id="xla:446392"/>
<dbReference type="AGR" id="Xenbase:XB-GENE-6251476"/>
<dbReference type="CTD" id="446392"/>
<dbReference type="Xenbase" id="XB-GENE-6251476">
    <property type="gene designation" value="b9d1.L"/>
</dbReference>
<dbReference type="OrthoDB" id="431939at2759"/>
<dbReference type="Proteomes" id="UP000186698">
    <property type="component" value="Chromosome 9_10L"/>
</dbReference>
<dbReference type="Bgee" id="446392">
    <property type="expression patterns" value="Expressed in egg cell and 19 other cell types or tissues"/>
</dbReference>
<dbReference type="GO" id="GO:0005813">
    <property type="term" value="C:centrosome"/>
    <property type="evidence" value="ECO:0000250"/>
    <property type="project" value="UniProtKB"/>
</dbReference>
<dbReference type="GO" id="GO:0036064">
    <property type="term" value="C:ciliary basal body"/>
    <property type="evidence" value="ECO:0000250"/>
    <property type="project" value="UniProtKB"/>
</dbReference>
<dbReference type="GO" id="GO:0035869">
    <property type="term" value="C:ciliary transition zone"/>
    <property type="evidence" value="ECO:0000250"/>
    <property type="project" value="UniProtKB"/>
</dbReference>
<dbReference type="GO" id="GO:0005737">
    <property type="term" value="C:cytoplasm"/>
    <property type="evidence" value="ECO:0007669"/>
    <property type="project" value="UniProtKB-KW"/>
</dbReference>
<dbReference type="GO" id="GO:0036038">
    <property type="term" value="C:MKS complex"/>
    <property type="evidence" value="ECO:0000250"/>
    <property type="project" value="UniProtKB"/>
</dbReference>
<dbReference type="GO" id="GO:0060271">
    <property type="term" value="P:cilium assembly"/>
    <property type="evidence" value="ECO:0000250"/>
    <property type="project" value="UniProtKB"/>
</dbReference>
<dbReference type="GO" id="GO:0007224">
    <property type="term" value="P:smoothened signaling pathway"/>
    <property type="evidence" value="ECO:0000250"/>
    <property type="project" value="UniProtKB"/>
</dbReference>
<dbReference type="InterPro" id="IPR010796">
    <property type="entry name" value="C2_B9-type_dom"/>
</dbReference>
<dbReference type="PANTHER" id="PTHR12968">
    <property type="entry name" value="B9 DOMAIN-CONTAINING"/>
    <property type="match status" value="1"/>
</dbReference>
<dbReference type="PANTHER" id="PTHR12968:SF1">
    <property type="entry name" value="B9 DOMAIN-CONTAINING PROTEIN 1"/>
    <property type="match status" value="1"/>
</dbReference>
<dbReference type="Pfam" id="PF07162">
    <property type="entry name" value="B9-C2"/>
    <property type="match status" value="1"/>
</dbReference>
<dbReference type="PROSITE" id="PS51381">
    <property type="entry name" value="C2_B9"/>
    <property type="match status" value="1"/>
</dbReference>
<evidence type="ECO:0000250" key="1"/>
<evidence type="ECO:0000255" key="2">
    <source>
        <dbReference type="PROSITE-ProRule" id="PRU00713"/>
    </source>
</evidence>
<evidence type="ECO:0000305" key="3"/>